<protein>
    <recommendedName>
        <fullName>NTE family protein RssA</fullName>
    </recommendedName>
</protein>
<accession>P0AFR1</accession>
<accession>P37053</accession>
<accession>P37054</accession>
<dbReference type="EMBL" id="AE005674">
    <property type="protein sequence ID" value="AAN42847.2"/>
    <property type="molecule type" value="Genomic_DNA"/>
</dbReference>
<dbReference type="EMBL" id="AE014073">
    <property type="protein sequence ID" value="AAP16732.1"/>
    <property type="molecule type" value="Genomic_DNA"/>
</dbReference>
<dbReference type="EMBL" id="X66849">
    <property type="status" value="NOT_ANNOTATED_CDS"/>
    <property type="molecule type" value="Genomic_DNA"/>
</dbReference>
<dbReference type="RefSeq" id="WP_001295622.1">
    <property type="nucleotide sequence ID" value="NZ_WPGW01000029.1"/>
</dbReference>
<dbReference type="SMR" id="P0AFR1"/>
<dbReference type="STRING" id="198214.SF1234"/>
<dbReference type="PaxDb" id="198214-SF1234"/>
<dbReference type="GeneID" id="93775300"/>
<dbReference type="KEGG" id="sfl:SF1234"/>
<dbReference type="KEGG" id="sfx:S1320"/>
<dbReference type="PATRIC" id="fig|198214.7.peg.1452"/>
<dbReference type="HOGENOM" id="CLU_047251_2_0_6"/>
<dbReference type="Proteomes" id="UP000001006">
    <property type="component" value="Chromosome"/>
</dbReference>
<dbReference type="Proteomes" id="UP000002673">
    <property type="component" value="Chromosome"/>
</dbReference>
<dbReference type="GO" id="GO:0004622">
    <property type="term" value="F:lysophospholipase activity"/>
    <property type="evidence" value="ECO:0007669"/>
    <property type="project" value="InterPro"/>
</dbReference>
<dbReference type="GO" id="GO:0016042">
    <property type="term" value="P:lipid catabolic process"/>
    <property type="evidence" value="ECO:0007669"/>
    <property type="project" value="UniProtKB-KW"/>
</dbReference>
<dbReference type="GO" id="GO:0046470">
    <property type="term" value="P:phosphatidylcholine metabolic process"/>
    <property type="evidence" value="ECO:0007669"/>
    <property type="project" value="InterPro"/>
</dbReference>
<dbReference type="CDD" id="cd07228">
    <property type="entry name" value="Pat_NTE_like_bacteria"/>
    <property type="match status" value="1"/>
</dbReference>
<dbReference type="Gene3D" id="3.40.1090.10">
    <property type="entry name" value="Cytosolic phospholipase A2 catalytic domain"/>
    <property type="match status" value="1"/>
</dbReference>
<dbReference type="InterPro" id="IPR016035">
    <property type="entry name" value="Acyl_Trfase/lysoPLipase"/>
</dbReference>
<dbReference type="InterPro" id="IPR001423">
    <property type="entry name" value="LysoPLipase_patatin_CS"/>
</dbReference>
<dbReference type="InterPro" id="IPR050301">
    <property type="entry name" value="NTE"/>
</dbReference>
<dbReference type="InterPro" id="IPR002641">
    <property type="entry name" value="PNPLA_dom"/>
</dbReference>
<dbReference type="NCBIfam" id="NF007623">
    <property type="entry name" value="PRK10279.1"/>
    <property type="match status" value="1"/>
</dbReference>
<dbReference type="PANTHER" id="PTHR14226">
    <property type="entry name" value="NEUROPATHY TARGET ESTERASE/SWISS CHEESE D.MELANOGASTER"/>
    <property type="match status" value="1"/>
</dbReference>
<dbReference type="PANTHER" id="PTHR14226:SF76">
    <property type="entry name" value="NTE FAMILY PROTEIN RSSA"/>
    <property type="match status" value="1"/>
</dbReference>
<dbReference type="Pfam" id="PF01734">
    <property type="entry name" value="Patatin"/>
    <property type="match status" value="1"/>
</dbReference>
<dbReference type="SUPFAM" id="SSF52151">
    <property type="entry name" value="FabD/lysophospholipase-like"/>
    <property type="match status" value="1"/>
</dbReference>
<dbReference type="PROSITE" id="PS51635">
    <property type="entry name" value="PNPLA"/>
    <property type="match status" value="1"/>
</dbReference>
<dbReference type="PROSITE" id="PS01237">
    <property type="entry name" value="UPF0028"/>
    <property type="match status" value="1"/>
</dbReference>
<name>RSSA_SHIFL</name>
<evidence type="ECO:0000255" key="1">
    <source>
        <dbReference type="PROSITE-ProRule" id="PRU01161"/>
    </source>
</evidence>
<evidence type="ECO:0000305" key="2"/>
<reference key="1">
    <citation type="journal article" date="2002" name="Nucleic Acids Res.">
        <title>Genome sequence of Shigella flexneri 2a: insights into pathogenicity through comparison with genomes of Escherichia coli K12 and O157.</title>
        <authorList>
            <person name="Jin Q."/>
            <person name="Yuan Z."/>
            <person name="Xu J."/>
            <person name="Wang Y."/>
            <person name="Shen Y."/>
            <person name="Lu W."/>
            <person name="Wang J."/>
            <person name="Liu H."/>
            <person name="Yang J."/>
            <person name="Yang F."/>
            <person name="Zhang X."/>
            <person name="Zhang J."/>
            <person name="Yang G."/>
            <person name="Wu H."/>
            <person name="Qu D."/>
            <person name="Dong J."/>
            <person name="Sun L."/>
            <person name="Xue Y."/>
            <person name="Zhao A."/>
            <person name="Gao Y."/>
            <person name="Zhu J."/>
            <person name="Kan B."/>
            <person name="Ding K."/>
            <person name="Chen S."/>
            <person name="Cheng H."/>
            <person name="Yao Z."/>
            <person name="He B."/>
            <person name="Chen R."/>
            <person name="Ma D."/>
            <person name="Qiang B."/>
            <person name="Wen Y."/>
            <person name="Hou Y."/>
            <person name="Yu J."/>
        </authorList>
    </citation>
    <scope>NUCLEOTIDE SEQUENCE [LARGE SCALE GENOMIC DNA]</scope>
    <source>
        <strain>301 / Serotype 2a</strain>
    </source>
</reference>
<reference key="2">
    <citation type="journal article" date="2003" name="Infect. Immun.">
        <title>Complete genome sequence and comparative genomics of Shigella flexneri serotype 2a strain 2457T.</title>
        <authorList>
            <person name="Wei J."/>
            <person name="Goldberg M.B."/>
            <person name="Burland V."/>
            <person name="Venkatesan M.M."/>
            <person name="Deng W."/>
            <person name="Fournier G."/>
            <person name="Mayhew G.F."/>
            <person name="Plunkett G. III"/>
            <person name="Rose D.J."/>
            <person name="Darling A."/>
            <person name="Mau B."/>
            <person name="Perna N.T."/>
            <person name="Payne S.M."/>
            <person name="Runyen-Janecky L.J."/>
            <person name="Zhou S."/>
            <person name="Schwartz D.C."/>
            <person name="Blattner F.R."/>
        </authorList>
    </citation>
    <scope>NUCLEOTIDE SEQUENCE [LARGE SCALE GENOMIC DNA]</scope>
    <source>
        <strain>ATCC 700930 / 2457T / Serotype 2a</strain>
    </source>
</reference>
<reference key="3">
    <citation type="journal article" date="1992" name="Mol. Microbiol.">
        <title>Temperature regulation of Shigella virulence: identification of the repressor gene virR, an analogue of hns, and partial complementation by tyrosyl transfer RNA (tRNA1(Tyr)).</title>
        <authorList>
            <person name="Hromockyj A.E."/>
            <person name="Tucker S.C."/>
            <person name="Maurelli A.T."/>
        </authorList>
    </citation>
    <scope>NUCLEOTIDE SEQUENCE [GENOMIC DNA] OF 1-179</scope>
    <source>
        <strain>Serotype 2a</strain>
    </source>
</reference>
<gene>
    <name type="primary">rssA</name>
    <name type="ordered locus">SF1234</name>
    <name type="ordered locus">S1320</name>
</gene>
<proteinExistence type="inferred from homology"/>
<keyword id="KW-0378">Hydrolase</keyword>
<keyword id="KW-0442">Lipid degradation</keyword>
<keyword id="KW-0443">Lipid metabolism</keyword>
<keyword id="KW-1185">Reference proteome</keyword>
<feature type="chain" id="PRO_0000172532" description="NTE family protein RssA">
    <location>
        <begin position="1"/>
        <end position="301"/>
    </location>
</feature>
<feature type="domain" description="PNPLA" evidence="1">
    <location>
        <begin position="8"/>
        <end position="168"/>
    </location>
</feature>
<feature type="short sequence motif" description="GXSXG" evidence="1">
    <location>
        <begin position="39"/>
        <end position="43"/>
    </location>
</feature>
<feature type="short sequence motif" description="DGA/G" evidence="1">
    <location>
        <begin position="155"/>
        <end position="157"/>
    </location>
</feature>
<feature type="active site" description="Nucleophile" evidence="1">
    <location>
        <position position="41"/>
    </location>
</feature>
<feature type="active site" description="Proton acceptor" evidence="1">
    <location>
        <position position="155"/>
    </location>
</feature>
<feature type="sequence conflict" description="In Ref. 3; X66849." evidence="2" ref="3">
    <original>G</original>
    <variation>A</variation>
    <location>
        <position position="7"/>
    </location>
</feature>
<feature type="sequence conflict" description="In Ref. 3; X66849." evidence="2" ref="3">
    <original>G</original>
    <variation>C</variation>
    <location>
        <position position="31"/>
    </location>
</feature>
<feature type="sequence conflict" description="In Ref. 3; X66849." evidence="2" ref="3">
    <original>DV</original>
    <variation>EL</variation>
    <location>
        <begin position="69"/>
        <end position="70"/>
    </location>
</feature>
<feature type="sequence conflict" description="In Ref. 3; X66849." evidence="2" ref="3">
    <original>A</original>
    <variation>P</variation>
    <location>
        <position position="111"/>
    </location>
</feature>
<comment type="similarity">
    <text evidence="2">Belongs to the NTE family.</text>
</comment>
<comment type="sequence caution" evidence="2">
    <conflict type="frameshift">
        <sequence resource="EMBL" id="X66849"/>
    </conflict>
</comment>
<organism>
    <name type="scientific">Shigella flexneri</name>
    <dbReference type="NCBI Taxonomy" id="623"/>
    <lineage>
        <taxon>Bacteria</taxon>
        <taxon>Pseudomonadati</taxon>
        <taxon>Pseudomonadota</taxon>
        <taxon>Gammaproteobacteria</taxon>
        <taxon>Enterobacterales</taxon>
        <taxon>Enterobacteriaceae</taxon>
        <taxon>Shigella</taxon>
    </lineage>
</organism>
<sequence>MRKIKIGLALGSGAARGWSHIGVINALKKVGIEIDIVAGCSIGSLVGAAYACDRLSALEDWVTSFSYWDVLRLMDLSWQRGGLLRGERVFNQYREIMPETEIENCSRRFAAVATNLSTGRELWFTEGDLHLAIRASCSIPGLMAPVAHNGYWLVDGAVVNPIPISLTRALGADIVIAVDLQHDAHLMQQDLLSFNVSEENSENGDSLPWHARLKERLGSITTRRAVTAPTATEIMTTSIQVLENRLKRNRMAGDPPDILIQPVCPQISTLDFHRAHAAIAAGQLAVERKMDELLPLVRTNI</sequence>